<feature type="chain" id="PRO_0000341150" description="D-alanine--D-alanine ligase">
    <location>
        <begin position="1"/>
        <end position="325"/>
    </location>
</feature>
<feature type="domain" description="ATP-grasp" evidence="2">
    <location>
        <begin position="107"/>
        <end position="311"/>
    </location>
</feature>
<feature type="binding site" evidence="2">
    <location>
        <begin position="137"/>
        <end position="192"/>
    </location>
    <ligand>
        <name>ATP</name>
        <dbReference type="ChEBI" id="CHEBI:30616"/>
    </ligand>
</feature>
<feature type="binding site" evidence="2">
    <location>
        <position position="264"/>
    </location>
    <ligand>
        <name>Mg(2+)</name>
        <dbReference type="ChEBI" id="CHEBI:18420"/>
        <label>1</label>
    </ligand>
</feature>
<feature type="binding site" evidence="2">
    <location>
        <position position="278"/>
    </location>
    <ligand>
        <name>Mg(2+)</name>
        <dbReference type="ChEBI" id="CHEBI:18420"/>
        <label>1</label>
    </ligand>
</feature>
<feature type="binding site" evidence="2">
    <location>
        <position position="278"/>
    </location>
    <ligand>
        <name>Mg(2+)</name>
        <dbReference type="ChEBI" id="CHEBI:18420"/>
        <label>2</label>
    </ligand>
</feature>
<feature type="binding site" evidence="2">
    <location>
        <position position="280"/>
    </location>
    <ligand>
        <name>Mg(2+)</name>
        <dbReference type="ChEBI" id="CHEBI:18420"/>
        <label>2</label>
    </ligand>
</feature>
<gene>
    <name evidence="2" type="primary">ddl</name>
    <name type="ordered locus">Pnap_3415</name>
</gene>
<keyword id="KW-0067">ATP-binding</keyword>
<keyword id="KW-0133">Cell shape</keyword>
<keyword id="KW-0961">Cell wall biogenesis/degradation</keyword>
<keyword id="KW-0963">Cytoplasm</keyword>
<keyword id="KW-0436">Ligase</keyword>
<keyword id="KW-0460">Magnesium</keyword>
<keyword id="KW-0464">Manganese</keyword>
<keyword id="KW-0479">Metal-binding</keyword>
<keyword id="KW-0547">Nucleotide-binding</keyword>
<keyword id="KW-0573">Peptidoglycan synthesis</keyword>
<keyword id="KW-1185">Reference proteome</keyword>
<organism>
    <name type="scientific">Polaromonas naphthalenivorans (strain CJ2)</name>
    <dbReference type="NCBI Taxonomy" id="365044"/>
    <lineage>
        <taxon>Bacteria</taxon>
        <taxon>Pseudomonadati</taxon>
        <taxon>Pseudomonadota</taxon>
        <taxon>Betaproteobacteria</taxon>
        <taxon>Burkholderiales</taxon>
        <taxon>Comamonadaceae</taxon>
        <taxon>Polaromonas</taxon>
    </lineage>
</organism>
<comment type="function">
    <text evidence="2">Cell wall formation.</text>
</comment>
<comment type="catalytic activity">
    <reaction evidence="2">
        <text>2 D-alanine + ATP = D-alanyl-D-alanine + ADP + phosphate + H(+)</text>
        <dbReference type="Rhea" id="RHEA:11224"/>
        <dbReference type="ChEBI" id="CHEBI:15378"/>
        <dbReference type="ChEBI" id="CHEBI:30616"/>
        <dbReference type="ChEBI" id="CHEBI:43474"/>
        <dbReference type="ChEBI" id="CHEBI:57416"/>
        <dbReference type="ChEBI" id="CHEBI:57822"/>
        <dbReference type="ChEBI" id="CHEBI:456216"/>
        <dbReference type="EC" id="6.3.2.4"/>
    </reaction>
</comment>
<comment type="cofactor">
    <cofactor evidence="1">
        <name>Mg(2+)</name>
        <dbReference type="ChEBI" id="CHEBI:18420"/>
    </cofactor>
    <cofactor evidence="1">
        <name>Mn(2+)</name>
        <dbReference type="ChEBI" id="CHEBI:29035"/>
    </cofactor>
    <text evidence="1">Binds 2 magnesium or manganese ions per subunit.</text>
</comment>
<comment type="pathway">
    <text evidence="2">Cell wall biogenesis; peptidoglycan biosynthesis.</text>
</comment>
<comment type="subcellular location">
    <subcellularLocation>
        <location evidence="2">Cytoplasm</location>
    </subcellularLocation>
</comment>
<comment type="similarity">
    <text evidence="2">Belongs to the D-alanine--D-alanine ligase family.</text>
</comment>
<evidence type="ECO:0000250" key="1"/>
<evidence type="ECO:0000255" key="2">
    <source>
        <dbReference type="HAMAP-Rule" id="MF_00047"/>
    </source>
</evidence>
<reference key="1">
    <citation type="journal article" date="2009" name="Environ. Microbiol.">
        <title>The genome of Polaromonas naphthalenivorans strain CJ2, isolated from coal tar-contaminated sediment, reveals physiological and metabolic versatility and evolution through extensive horizontal gene transfer.</title>
        <authorList>
            <person name="Yagi J.M."/>
            <person name="Sims D."/>
            <person name="Brettin T."/>
            <person name="Bruce D."/>
            <person name="Madsen E.L."/>
        </authorList>
    </citation>
    <scope>NUCLEOTIDE SEQUENCE [LARGE SCALE GENOMIC DNA]</scope>
    <source>
        <strain>CJ2</strain>
    </source>
</reference>
<sequence length="325" mass="34584">MSPNPSSFGKVAVLMGGRSAEREISLMSGSGVVQALRSQGIDAHAFDPAERDLGELKTGGFARCFIALHGRFGEDGTVQGALELLGIPYTGSGVMASSMAIDKVMTKRLLLSESLPTPRYVLLRRGGYSPAQVDAIVDTLGLPLIVKPAREGSSLGLSKVTERAAMAAAVALAEKMDADILCEQFISGDEVTCPVLGTGEQARALPVIRIVAPEGNYDYQNKYFTDTTQYLVPCGLPAGEEAAIQQLVLQAFRTLNCRGWARADVMIDQATRKPYLLEINTSPGMTGHSLVPMSARAAGISYEALCVEVLKTALLDHQPRDGSLP</sequence>
<protein>
    <recommendedName>
        <fullName evidence="2">D-alanine--D-alanine ligase</fullName>
        <ecNumber evidence="2">6.3.2.4</ecNumber>
    </recommendedName>
    <alternativeName>
        <fullName evidence="2">D-Ala-D-Ala ligase</fullName>
    </alternativeName>
    <alternativeName>
        <fullName evidence="2">D-alanylalanine synthetase</fullName>
    </alternativeName>
</protein>
<name>DDL_POLNA</name>
<proteinExistence type="inferred from homology"/>
<dbReference type="EC" id="6.3.2.4" evidence="2"/>
<dbReference type="EMBL" id="CP000529">
    <property type="protein sequence ID" value="ABM38712.1"/>
    <property type="molecule type" value="Genomic_DNA"/>
</dbReference>
<dbReference type="RefSeq" id="WP_011802783.1">
    <property type="nucleotide sequence ID" value="NC_008781.1"/>
</dbReference>
<dbReference type="SMR" id="A1VST4"/>
<dbReference type="STRING" id="365044.Pnap_3415"/>
<dbReference type="KEGG" id="pna:Pnap_3415"/>
<dbReference type="eggNOG" id="COG1181">
    <property type="taxonomic scope" value="Bacteria"/>
</dbReference>
<dbReference type="HOGENOM" id="CLU_039268_1_2_4"/>
<dbReference type="OrthoDB" id="9813261at2"/>
<dbReference type="UniPathway" id="UPA00219"/>
<dbReference type="Proteomes" id="UP000000644">
    <property type="component" value="Chromosome"/>
</dbReference>
<dbReference type="GO" id="GO:0005829">
    <property type="term" value="C:cytosol"/>
    <property type="evidence" value="ECO:0007669"/>
    <property type="project" value="TreeGrafter"/>
</dbReference>
<dbReference type="GO" id="GO:0005524">
    <property type="term" value="F:ATP binding"/>
    <property type="evidence" value="ECO:0007669"/>
    <property type="project" value="UniProtKB-KW"/>
</dbReference>
<dbReference type="GO" id="GO:0008716">
    <property type="term" value="F:D-alanine-D-alanine ligase activity"/>
    <property type="evidence" value="ECO:0007669"/>
    <property type="project" value="UniProtKB-UniRule"/>
</dbReference>
<dbReference type="GO" id="GO:0046872">
    <property type="term" value="F:metal ion binding"/>
    <property type="evidence" value="ECO:0007669"/>
    <property type="project" value="UniProtKB-KW"/>
</dbReference>
<dbReference type="GO" id="GO:0071555">
    <property type="term" value="P:cell wall organization"/>
    <property type="evidence" value="ECO:0007669"/>
    <property type="project" value="UniProtKB-KW"/>
</dbReference>
<dbReference type="GO" id="GO:0009252">
    <property type="term" value="P:peptidoglycan biosynthetic process"/>
    <property type="evidence" value="ECO:0007669"/>
    <property type="project" value="UniProtKB-UniRule"/>
</dbReference>
<dbReference type="GO" id="GO:0008360">
    <property type="term" value="P:regulation of cell shape"/>
    <property type="evidence" value="ECO:0007669"/>
    <property type="project" value="UniProtKB-KW"/>
</dbReference>
<dbReference type="FunFam" id="3.30.470.20:FF:000008">
    <property type="entry name" value="D-alanine--D-alanine ligase"/>
    <property type="match status" value="1"/>
</dbReference>
<dbReference type="FunFam" id="3.40.50.20:FF:000013">
    <property type="entry name" value="D-alanine--D-alanine ligase"/>
    <property type="match status" value="1"/>
</dbReference>
<dbReference type="Gene3D" id="3.40.50.20">
    <property type="match status" value="1"/>
</dbReference>
<dbReference type="Gene3D" id="3.30.1490.20">
    <property type="entry name" value="ATP-grasp fold, A domain"/>
    <property type="match status" value="1"/>
</dbReference>
<dbReference type="Gene3D" id="3.30.470.20">
    <property type="entry name" value="ATP-grasp fold, B domain"/>
    <property type="match status" value="1"/>
</dbReference>
<dbReference type="HAMAP" id="MF_00047">
    <property type="entry name" value="Dala_Dala_lig"/>
    <property type="match status" value="1"/>
</dbReference>
<dbReference type="InterPro" id="IPR011761">
    <property type="entry name" value="ATP-grasp"/>
</dbReference>
<dbReference type="InterPro" id="IPR013815">
    <property type="entry name" value="ATP_grasp_subdomain_1"/>
</dbReference>
<dbReference type="InterPro" id="IPR000291">
    <property type="entry name" value="D-Ala_lig_Van_CS"/>
</dbReference>
<dbReference type="InterPro" id="IPR005905">
    <property type="entry name" value="D_ala_D_ala"/>
</dbReference>
<dbReference type="InterPro" id="IPR011095">
    <property type="entry name" value="Dala_Dala_lig_C"/>
</dbReference>
<dbReference type="InterPro" id="IPR011127">
    <property type="entry name" value="Dala_Dala_lig_N"/>
</dbReference>
<dbReference type="InterPro" id="IPR016185">
    <property type="entry name" value="PreATP-grasp_dom_sf"/>
</dbReference>
<dbReference type="NCBIfam" id="TIGR01205">
    <property type="entry name" value="D_ala_D_alaTIGR"/>
    <property type="match status" value="1"/>
</dbReference>
<dbReference type="NCBIfam" id="NF002378">
    <property type="entry name" value="PRK01372.1"/>
    <property type="match status" value="1"/>
</dbReference>
<dbReference type="PANTHER" id="PTHR23132">
    <property type="entry name" value="D-ALANINE--D-ALANINE LIGASE"/>
    <property type="match status" value="1"/>
</dbReference>
<dbReference type="PANTHER" id="PTHR23132:SF23">
    <property type="entry name" value="D-ALANINE--D-ALANINE LIGASE B"/>
    <property type="match status" value="1"/>
</dbReference>
<dbReference type="Pfam" id="PF07478">
    <property type="entry name" value="Dala_Dala_lig_C"/>
    <property type="match status" value="1"/>
</dbReference>
<dbReference type="Pfam" id="PF01820">
    <property type="entry name" value="Dala_Dala_lig_N"/>
    <property type="match status" value="1"/>
</dbReference>
<dbReference type="PIRSF" id="PIRSF039102">
    <property type="entry name" value="Ddl/VanB"/>
    <property type="match status" value="1"/>
</dbReference>
<dbReference type="SMART" id="SM01209">
    <property type="entry name" value="GARS_A"/>
    <property type="match status" value="1"/>
</dbReference>
<dbReference type="SUPFAM" id="SSF56059">
    <property type="entry name" value="Glutathione synthetase ATP-binding domain-like"/>
    <property type="match status" value="1"/>
</dbReference>
<dbReference type="SUPFAM" id="SSF52440">
    <property type="entry name" value="PreATP-grasp domain"/>
    <property type="match status" value="1"/>
</dbReference>
<dbReference type="PROSITE" id="PS50975">
    <property type="entry name" value="ATP_GRASP"/>
    <property type="match status" value="1"/>
</dbReference>
<dbReference type="PROSITE" id="PS00843">
    <property type="entry name" value="DALA_DALA_LIGASE_1"/>
    <property type="match status" value="1"/>
</dbReference>
<dbReference type="PROSITE" id="PS00844">
    <property type="entry name" value="DALA_DALA_LIGASE_2"/>
    <property type="match status" value="1"/>
</dbReference>
<accession>A1VST4</accession>